<proteinExistence type="inferred from homology"/>
<sequence>MSHHHHHHQASLVVAYLLLIFLGFFGVHRFYVGRTISGVVYLLTGGIFGIGYIVDFFLLPSLVCHYNNKHHDHTTVIVSPTPVVYQSGSQHYAPYQPQPYYAQQPIQPQQQQYYQQPYQQQQYQPQPYQPNSPQYQP</sequence>
<keyword id="KW-0472">Membrane</keyword>
<keyword id="KW-1185">Reference proteome</keyword>
<keyword id="KW-0812">Transmembrane</keyword>
<keyword id="KW-1133">Transmembrane helix</keyword>
<feature type="chain" id="PRO_0000330737" description="TM2 domain-containing protein DDB_G0287015">
    <location>
        <begin position="1"/>
        <end position="137"/>
    </location>
</feature>
<feature type="transmembrane region" description="Helical" evidence="1">
    <location>
        <begin position="12"/>
        <end position="32"/>
    </location>
</feature>
<feature type="transmembrane region" description="Helical" evidence="1">
    <location>
        <begin position="39"/>
        <end position="59"/>
    </location>
</feature>
<feature type="domain" description="TM2" evidence="1">
    <location>
        <begin position="9"/>
        <end position="57"/>
    </location>
</feature>
<feature type="region of interest" description="Disordered" evidence="2">
    <location>
        <begin position="106"/>
        <end position="137"/>
    </location>
</feature>
<evidence type="ECO:0000255" key="1"/>
<evidence type="ECO:0000256" key="2">
    <source>
        <dbReference type="SAM" id="MobiDB-lite"/>
    </source>
</evidence>
<evidence type="ECO:0000305" key="3"/>
<comment type="subcellular location">
    <subcellularLocation>
        <location evidence="3">Membrane</location>
        <topology evidence="3">Multi-pass membrane protein</topology>
    </subcellularLocation>
</comment>
<comment type="similarity">
    <text evidence="3">Belongs to the TM2 family.</text>
</comment>
<gene>
    <name type="ORF">DDB_G0287015</name>
</gene>
<organism>
    <name type="scientific">Dictyostelium discoideum</name>
    <name type="common">Social amoeba</name>
    <dbReference type="NCBI Taxonomy" id="44689"/>
    <lineage>
        <taxon>Eukaryota</taxon>
        <taxon>Amoebozoa</taxon>
        <taxon>Evosea</taxon>
        <taxon>Eumycetozoa</taxon>
        <taxon>Dictyostelia</taxon>
        <taxon>Dictyosteliales</taxon>
        <taxon>Dictyosteliaceae</taxon>
        <taxon>Dictyostelium</taxon>
    </lineage>
</organism>
<name>TM2D3_DICDI</name>
<dbReference type="EMBL" id="AAFI02000095">
    <property type="protein sequence ID" value="EAL63934.1"/>
    <property type="molecule type" value="Genomic_DNA"/>
</dbReference>
<dbReference type="RefSeq" id="XP_637442.1">
    <property type="nucleotide sequence ID" value="XM_632350.1"/>
</dbReference>
<dbReference type="STRING" id="44689.Q54KZ0"/>
<dbReference type="GlyGen" id="Q54KZ0">
    <property type="glycosylation" value="1 site"/>
</dbReference>
<dbReference type="PaxDb" id="44689-DDB0266470"/>
<dbReference type="EnsemblProtists" id="EAL63934">
    <property type="protein sequence ID" value="EAL63934"/>
    <property type="gene ID" value="DDB_G0287015"/>
</dbReference>
<dbReference type="GeneID" id="8625910"/>
<dbReference type="KEGG" id="ddi:DDB_G0287015"/>
<dbReference type="dictyBase" id="DDB_G0287015"/>
<dbReference type="VEuPathDB" id="AmoebaDB:DDB_G0287015"/>
<dbReference type="eggNOG" id="ENOG502S10C">
    <property type="taxonomic scope" value="Eukaryota"/>
</dbReference>
<dbReference type="HOGENOM" id="CLU_1868976_0_0_1"/>
<dbReference type="InParanoid" id="Q54KZ0"/>
<dbReference type="OMA" id="QHYAPYQ"/>
<dbReference type="PhylomeDB" id="Q54KZ0"/>
<dbReference type="PRO" id="PR:Q54KZ0"/>
<dbReference type="Proteomes" id="UP000002195">
    <property type="component" value="Chromosome 4"/>
</dbReference>
<dbReference type="GO" id="GO:0016020">
    <property type="term" value="C:membrane"/>
    <property type="evidence" value="ECO:0007669"/>
    <property type="project" value="UniProtKB-SubCell"/>
</dbReference>
<dbReference type="InterPro" id="IPR007829">
    <property type="entry name" value="TM2"/>
</dbReference>
<dbReference type="InterPro" id="IPR050932">
    <property type="entry name" value="TM2D1-3-like"/>
</dbReference>
<dbReference type="PANTHER" id="PTHR21016">
    <property type="entry name" value="BETA-AMYLOID BINDING PROTEIN-RELATED"/>
    <property type="match status" value="1"/>
</dbReference>
<dbReference type="PANTHER" id="PTHR21016:SF26">
    <property type="entry name" value="TM2 DOMAIN-CONTAINING PROTEIN DDB_G0287015"/>
    <property type="match status" value="1"/>
</dbReference>
<dbReference type="Pfam" id="PF05154">
    <property type="entry name" value="TM2"/>
    <property type="match status" value="1"/>
</dbReference>
<protein>
    <recommendedName>
        <fullName>TM2 domain-containing protein DDB_G0287015</fullName>
    </recommendedName>
</protein>
<reference key="1">
    <citation type="journal article" date="2005" name="Nature">
        <title>The genome of the social amoeba Dictyostelium discoideum.</title>
        <authorList>
            <person name="Eichinger L."/>
            <person name="Pachebat J.A."/>
            <person name="Gloeckner G."/>
            <person name="Rajandream M.A."/>
            <person name="Sucgang R."/>
            <person name="Berriman M."/>
            <person name="Song J."/>
            <person name="Olsen R."/>
            <person name="Szafranski K."/>
            <person name="Xu Q."/>
            <person name="Tunggal B."/>
            <person name="Kummerfeld S."/>
            <person name="Madera M."/>
            <person name="Konfortov B.A."/>
            <person name="Rivero F."/>
            <person name="Bankier A.T."/>
            <person name="Lehmann R."/>
            <person name="Hamlin N."/>
            <person name="Davies R."/>
            <person name="Gaudet P."/>
            <person name="Fey P."/>
            <person name="Pilcher K."/>
            <person name="Chen G."/>
            <person name="Saunders D."/>
            <person name="Sodergren E.J."/>
            <person name="Davis P."/>
            <person name="Kerhornou A."/>
            <person name="Nie X."/>
            <person name="Hall N."/>
            <person name="Anjard C."/>
            <person name="Hemphill L."/>
            <person name="Bason N."/>
            <person name="Farbrother P."/>
            <person name="Desany B."/>
            <person name="Just E."/>
            <person name="Morio T."/>
            <person name="Rost R."/>
            <person name="Churcher C.M."/>
            <person name="Cooper J."/>
            <person name="Haydock S."/>
            <person name="van Driessche N."/>
            <person name="Cronin A."/>
            <person name="Goodhead I."/>
            <person name="Muzny D.M."/>
            <person name="Mourier T."/>
            <person name="Pain A."/>
            <person name="Lu M."/>
            <person name="Harper D."/>
            <person name="Lindsay R."/>
            <person name="Hauser H."/>
            <person name="James K.D."/>
            <person name="Quiles M."/>
            <person name="Madan Babu M."/>
            <person name="Saito T."/>
            <person name="Buchrieser C."/>
            <person name="Wardroper A."/>
            <person name="Felder M."/>
            <person name="Thangavelu M."/>
            <person name="Johnson D."/>
            <person name="Knights A."/>
            <person name="Loulseged H."/>
            <person name="Mungall K.L."/>
            <person name="Oliver K."/>
            <person name="Price C."/>
            <person name="Quail M.A."/>
            <person name="Urushihara H."/>
            <person name="Hernandez J."/>
            <person name="Rabbinowitsch E."/>
            <person name="Steffen D."/>
            <person name="Sanders M."/>
            <person name="Ma J."/>
            <person name="Kohara Y."/>
            <person name="Sharp S."/>
            <person name="Simmonds M.N."/>
            <person name="Spiegler S."/>
            <person name="Tivey A."/>
            <person name="Sugano S."/>
            <person name="White B."/>
            <person name="Walker D."/>
            <person name="Woodward J.R."/>
            <person name="Winckler T."/>
            <person name="Tanaka Y."/>
            <person name="Shaulsky G."/>
            <person name="Schleicher M."/>
            <person name="Weinstock G.M."/>
            <person name="Rosenthal A."/>
            <person name="Cox E.C."/>
            <person name="Chisholm R.L."/>
            <person name="Gibbs R.A."/>
            <person name="Loomis W.F."/>
            <person name="Platzer M."/>
            <person name="Kay R.R."/>
            <person name="Williams J.G."/>
            <person name="Dear P.H."/>
            <person name="Noegel A.A."/>
            <person name="Barrell B.G."/>
            <person name="Kuspa A."/>
        </authorList>
    </citation>
    <scope>NUCLEOTIDE SEQUENCE [LARGE SCALE GENOMIC DNA]</scope>
    <source>
        <strain>AX4</strain>
    </source>
</reference>
<accession>Q54KZ0</accession>